<keyword id="KW-0066">ATP synthesis</keyword>
<keyword id="KW-0067">ATP-binding</keyword>
<keyword id="KW-0139">CF(1)</keyword>
<keyword id="KW-0150">Chloroplast</keyword>
<keyword id="KW-0375">Hydrogen ion transport</keyword>
<keyword id="KW-0406">Ion transport</keyword>
<keyword id="KW-0472">Membrane</keyword>
<keyword id="KW-0547">Nucleotide-binding</keyword>
<keyword id="KW-0934">Plastid</keyword>
<keyword id="KW-1185">Reference proteome</keyword>
<keyword id="KW-0793">Thylakoid</keyword>
<keyword id="KW-1278">Translocase</keyword>
<keyword id="KW-0813">Transport</keyword>
<geneLocation type="chloroplast"/>
<accession>P0C2Z6</accession>
<accession>P12084</accession>
<accession>Q6QY13</accession>
<accession>Q6QY77</accession>
<comment type="function">
    <text>Produces ATP from ADP in the presence of a proton gradient across the membrane. The alpha chain is a regulatory subunit.</text>
</comment>
<comment type="catalytic activity">
    <reaction evidence="1">
        <text>ATP + H2O + 4 H(+)(in) = ADP + phosphate + 5 H(+)(out)</text>
        <dbReference type="Rhea" id="RHEA:57720"/>
        <dbReference type="ChEBI" id="CHEBI:15377"/>
        <dbReference type="ChEBI" id="CHEBI:15378"/>
        <dbReference type="ChEBI" id="CHEBI:30616"/>
        <dbReference type="ChEBI" id="CHEBI:43474"/>
        <dbReference type="ChEBI" id="CHEBI:456216"/>
        <dbReference type="EC" id="7.1.2.2"/>
    </reaction>
</comment>
<comment type="subunit">
    <text evidence="1">F-type ATPases have 2 components, CF(1) - the catalytic core - and CF(0) - the membrane proton channel. CF(1) has five subunits: alpha(3), beta(3), gamma(1), delta(1), epsilon(1). CF(0) has four main subunits: a, b, b' and c.</text>
</comment>
<comment type="subcellular location">
    <subcellularLocation>
        <location evidence="1">Plastid</location>
        <location evidence="1">Chloroplast thylakoid membrane</location>
        <topology evidence="1">Peripheral membrane protein</topology>
    </subcellularLocation>
</comment>
<comment type="similarity">
    <text evidence="1">Belongs to the ATPase alpha/beta chains family.</text>
</comment>
<comment type="sequence caution" evidence="2">
    <conflict type="erroneous initiation">
        <sequence resource="EMBL-CDS" id="AAS46118"/>
    </conflict>
</comment>
<dbReference type="EC" id="7.1.2.2" evidence="1"/>
<dbReference type="EMBL" id="X15901">
    <property type="protein sequence ID" value="CAA33993.1"/>
    <property type="molecule type" value="Genomic_DNA"/>
</dbReference>
<dbReference type="EMBL" id="AY522330">
    <property type="protein sequence ID" value="AAS46118.1"/>
    <property type="status" value="ALT_INIT"/>
    <property type="molecule type" value="Genomic_DNA"/>
</dbReference>
<dbReference type="PIR" id="JQ0220">
    <property type="entry name" value="PWRZA"/>
</dbReference>
<dbReference type="RefSeq" id="NP_039380.1">
    <property type="nucleotide sequence ID" value="NC_001320.1"/>
</dbReference>
<dbReference type="RefSeq" id="XP_015613749.1">
    <property type="nucleotide sequence ID" value="XM_015758263.1"/>
</dbReference>
<dbReference type="SMR" id="P0C2Z6"/>
<dbReference type="FunCoup" id="P0C2Z6">
    <property type="interactions" value="306"/>
</dbReference>
<dbReference type="STRING" id="39947.P0C2Z6"/>
<dbReference type="PaxDb" id="39947-P0C2Z6"/>
<dbReference type="EnsemblPlants" id="transcript-atpA">
    <property type="protein sequence ID" value="cds-CAA33993.1"/>
    <property type="gene ID" value="gene-atpA"/>
</dbReference>
<dbReference type="GeneID" id="3131390"/>
<dbReference type="Gramene" id="transcript-atpA">
    <property type="protein sequence ID" value="cds-CAA33993.1"/>
    <property type="gene ID" value="gene-atpA"/>
</dbReference>
<dbReference type="KEGG" id="dosa:atpA"/>
<dbReference type="KEGG" id="osa:107279124"/>
<dbReference type="KEGG" id="osa:3131390"/>
<dbReference type="InParanoid" id="P0C2Z6"/>
<dbReference type="OrthoDB" id="751331at2759"/>
<dbReference type="Proteomes" id="UP000059680">
    <property type="component" value="Chloroplast"/>
</dbReference>
<dbReference type="GO" id="GO:0009535">
    <property type="term" value="C:chloroplast thylakoid membrane"/>
    <property type="evidence" value="ECO:0007669"/>
    <property type="project" value="UniProtKB-SubCell"/>
</dbReference>
<dbReference type="GO" id="GO:0009536">
    <property type="term" value="C:plastid"/>
    <property type="evidence" value="ECO:0000305"/>
    <property type="project" value="Gramene"/>
</dbReference>
<dbReference type="GO" id="GO:0045259">
    <property type="term" value="C:proton-transporting ATP synthase complex"/>
    <property type="evidence" value="ECO:0007669"/>
    <property type="project" value="UniProtKB-KW"/>
</dbReference>
<dbReference type="GO" id="GO:0043531">
    <property type="term" value="F:ADP binding"/>
    <property type="evidence" value="ECO:0000318"/>
    <property type="project" value="GO_Central"/>
</dbReference>
<dbReference type="GO" id="GO:0005524">
    <property type="term" value="F:ATP binding"/>
    <property type="evidence" value="ECO:0000318"/>
    <property type="project" value="GO_Central"/>
</dbReference>
<dbReference type="GO" id="GO:0046933">
    <property type="term" value="F:proton-transporting ATP synthase activity, rotational mechanism"/>
    <property type="evidence" value="ECO:0007669"/>
    <property type="project" value="UniProtKB-UniRule"/>
</dbReference>
<dbReference type="GO" id="GO:0015986">
    <property type="term" value="P:proton motive force-driven ATP synthesis"/>
    <property type="evidence" value="ECO:0000318"/>
    <property type="project" value="GO_Central"/>
</dbReference>
<dbReference type="CDD" id="cd18113">
    <property type="entry name" value="ATP-synt_F1_alpha_C"/>
    <property type="match status" value="1"/>
</dbReference>
<dbReference type="CDD" id="cd18116">
    <property type="entry name" value="ATP-synt_F1_alpha_N"/>
    <property type="match status" value="1"/>
</dbReference>
<dbReference type="CDD" id="cd01132">
    <property type="entry name" value="F1-ATPase_alpha_CD"/>
    <property type="match status" value="1"/>
</dbReference>
<dbReference type="FunFam" id="1.20.150.20:FF:000001">
    <property type="entry name" value="ATP synthase subunit alpha"/>
    <property type="match status" value="1"/>
</dbReference>
<dbReference type="FunFam" id="2.40.30.20:FF:000001">
    <property type="entry name" value="ATP synthase subunit alpha"/>
    <property type="match status" value="1"/>
</dbReference>
<dbReference type="FunFam" id="3.40.50.300:FF:000002">
    <property type="entry name" value="ATP synthase subunit alpha"/>
    <property type="match status" value="1"/>
</dbReference>
<dbReference type="Gene3D" id="2.40.30.20">
    <property type="match status" value="1"/>
</dbReference>
<dbReference type="Gene3D" id="1.20.150.20">
    <property type="entry name" value="ATP synthase alpha/beta chain, C-terminal domain"/>
    <property type="match status" value="1"/>
</dbReference>
<dbReference type="Gene3D" id="3.40.50.300">
    <property type="entry name" value="P-loop containing nucleotide triphosphate hydrolases"/>
    <property type="match status" value="1"/>
</dbReference>
<dbReference type="HAMAP" id="MF_01346">
    <property type="entry name" value="ATP_synth_alpha_bact"/>
    <property type="match status" value="1"/>
</dbReference>
<dbReference type="InterPro" id="IPR023366">
    <property type="entry name" value="ATP_synth_asu-like_sf"/>
</dbReference>
<dbReference type="InterPro" id="IPR000793">
    <property type="entry name" value="ATP_synth_asu_C"/>
</dbReference>
<dbReference type="InterPro" id="IPR038376">
    <property type="entry name" value="ATP_synth_asu_C_sf"/>
</dbReference>
<dbReference type="InterPro" id="IPR033732">
    <property type="entry name" value="ATP_synth_F1_a_nt-bd_dom"/>
</dbReference>
<dbReference type="InterPro" id="IPR005294">
    <property type="entry name" value="ATP_synth_F1_asu"/>
</dbReference>
<dbReference type="InterPro" id="IPR020003">
    <property type="entry name" value="ATPase_a/bsu_AS"/>
</dbReference>
<dbReference type="InterPro" id="IPR004100">
    <property type="entry name" value="ATPase_F1/V1/A1_a/bsu_N"/>
</dbReference>
<dbReference type="InterPro" id="IPR036121">
    <property type="entry name" value="ATPase_F1/V1/A1_a/bsu_N_sf"/>
</dbReference>
<dbReference type="InterPro" id="IPR000194">
    <property type="entry name" value="ATPase_F1/V1/A1_a/bsu_nucl-bd"/>
</dbReference>
<dbReference type="InterPro" id="IPR027417">
    <property type="entry name" value="P-loop_NTPase"/>
</dbReference>
<dbReference type="NCBIfam" id="TIGR00962">
    <property type="entry name" value="atpA"/>
    <property type="match status" value="1"/>
</dbReference>
<dbReference type="NCBIfam" id="NF009884">
    <property type="entry name" value="PRK13343.1"/>
    <property type="match status" value="1"/>
</dbReference>
<dbReference type="PANTHER" id="PTHR48082:SF6">
    <property type="entry name" value="ATP SYNTHASE SUBUNIT ALPHA, CHLOROPLASTIC"/>
    <property type="match status" value="1"/>
</dbReference>
<dbReference type="PANTHER" id="PTHR48082">
    <property type="entry name" value="ATP SYNTHASE SUBUNIT ALPHA, MITOCHONDRIAL"/>
    <property type="match status" value="1"/>
</dbReference>
<dbReference type="Pfam" id="PF00006">
    <property type="entry name" value="ATP-synt_ab"/>
    <property type="match status" value="1"/>
</dbReference>
<dbReference type="Pfam" id="PF00306">
    <property type="entry name" value="ATP-synt_ab_C"/>
    <property type="match status" value="1"/>
</dbReference>
<dbReference type="Pfam" id="PF02874">
    <property type="entry name" value="ATP-synt_ab_N"/>
    <property type="match status" value="1"/>
</dbReference>
<dbReference type="PIRSF" id="PIRSF039088">
    <property type="entry name" value="F_ATPase_subunit_alpha"/>
    <property type="match status" value="1"/>
</dbReference>
<dbReference type="SUPFAM" id="SSF47917">
    <property type="entry name" value="C-terminal domain of alpha and beta subunits of F1 ATP synthase"/>
    <property type="match status" value="1"/>
</dbReference>
<dbReference type="SUPFAM" id="SSF50615">
    <property type="entry name" value="N-terminal domain of alpha and beta subunits of F1 ATP synthase"/>
    <property type="match status" value="1"/>
</dbReference>
<dbReference type="SUPFAM" id="SSF52540">
    <property type="entry name" value="P-loop containing nucleoside triphosphate hydrolases"/>
    <property type="match status" value="1"/>
</dbReference>
<dbReference type="PROSITE" id="PS00152">
    <property type="entry name" value="ATPASE_ALPHA_BETA"/>
    <property type="match status" value="1"/>
</dbReference>
<proteinExistence type="inferred from homology"/>
<sequence length="507" mass="55665">MATLRVDEIHKILRERIEQYNRKVGIENIGRVVQVGDGIARIIGLGEIMSGELVEFAEGTRGIALNLESKNVGIVLMGDGLMIQEGSFVKATGRIAQIPVSEAYLGRVINALAKPIDGRGEIVASESRLIESPAPGIISRRSVYEPLQTGLIAIDSMIPIGRGQRELIIGDRQTGKTAVATDTILNQKGQDVICVYVAIGQRASSVAQVVTTFHEEGAMEYTIVVAEMADSPATLQYLAPYTGAALAEYFMYRERHTLIIYDDLSKQAQAYRQMSLLLRRPPGREAYPGDVFYLHSRLLERAAKLNSLLGEGSMTALPIVETQSGDVSAYIPTNVISITDGQIFLSADLFNAGIRPAINVGISVSRVGSAAQIKAMKQVAGKSKLELAQFAELQAFAQFASALDKTSQNQLARGRRLRELLKQSQANPLPVEEQIATIYIGTRGYLDSLEIGQVKKFLDELRKHLKDTKPQFQEIISSSKTFTEEAEILLKEAIQEQLERFSLQEQT</sequence>
<reference key="1">
    <citation type="journal article" date="1989" name="Mol. Gen. Genet.">
        <title>The complete sequence of the rice (Oryza sativa) chloroplast genome: intermolecular recombination between distinct tRNA genes accounts for a major plastid DNA inversion during the evolution of the cereals.</title>
        <authorList>
            <person name="Hiratsuka J."/>
            <person name="Shimada H."/>
            <person name="Whittier R."/>
            <person name="Ishibashi T."/>
            <person name="Sakamoto M."/>
            <person name="Mori M."/>
            <person name="Kondo C."/>
            <person name="Honji Y."/>
            <person name="Sun C.-R."/>
            <person name="Meng B.-Y."/>
            <person name="Li Y.-Q."/>
            <person name="Kanno A."/>
            <person name="Nishizawa Y."/>
            <person name="Hirai A."/>
            <person name="Shinozaki K."/>
            <person name="Sugiura M."/>
        </authorList>
    </citation>
    <scope>NUCLEOTIDE SEQUENCE [LARGE SCALE GENOMIC DNA]</scope>
    <source>
        <strain>cv. Nipponbare</strain>
    </source>
</reference>
<reference key="2">
    <citation type="journal article" date="2004" name="Plant Physiol.">
        <title>A comparison of rice chloroplast genomes.</title>
        <authorList>
            <person name="Tang J."/>
            <person name="Xia H."/>
            <person name="Cao M."/>
            <person name="Zhang X."/>
            <person name="Zeng W."/>
            <person name="Hu S."/>
            <person name="Tong W."/>
            <person name="Wang J."/>
            <person name="Wang J."/>
            <person name="Yu J."/>
            <person name="Yang H."/>
            <person name="Zhu L."/>
        </authorList>
    </citation>
    <scope>NUCLEOTIDE SEQUENCE [LARGE SCALE GENOMIC DNA]</scope>
    <source>
        <strain>cv. Nipponbare</strain>
    </source>
</reference>
<organism>
    <name type="scientific">Oryza sativa subsp. japonica</name>
    <name type="common">Rice</name>
    <dbReference type="NCBI Taxonomy" id="39947"/>
    <lineage>
        <taxon>Eukaryota</taxon>
        <taxon>Viridiplantae</taxon>
        <taxon>Streptophyta</taxon>
        <taxon>Embryophyta</taxon>
        <taxon>Tracheophyta</taxon>
        <taxon>Spermatophyta</taxon>
        <taxon>Magnoliopsida</taxon>
        <taxon>Liliopsida</taxon>
        <taxon>Poales</taxon>
        <taxon>Poaceae</taxon>
        <taxon>BOP clade</taxon>
        <taxon>Oryzoideae</taxon>
        <taxon>Oryzeae</taxon>
        <taxon>Oryzinae</taxon>
        <taxon>Oryza</taxon>
        <taxon>Oryza sativa</taxon>
    </lineage>
</organism>
<name>ATPA_ORYSJ</name>
<feature type="chain" id="PRO_0000288521" description="ATP synthase subunit alpha, chloroplastic">
    <location>
        <begin position="1"/>
        <end position="507"/>
    </location>
</feature>
<feature type="binding site" evidence="1">
    <location>
        <begin position="170"/>
        <end position="177"/>
    </location>
    <ligand>
        <name>ATP</name>
        <dbReference type="ChEBI" id="CHEBI:30616"/>
    </ligand>
</feature>
<feature type="site" description="Required for activity" evidence="1">
    <location>
        <position position="363"/>
    </location>
</feature>
<gene>
    <name evidence="1" type="primary">atpA</name>
    <name type="ordered locus">LOC_Osp1g00310</name>
    <name type="ORF">Nip046</name>
</gene>
<protein>
    <recommendedName>
        <fullName evidence="1">ATP synthase subunit alpha, chloroplastic</fullName>
        <ecNumber evidence="1">7.1.2.2</ecNumber>
    </recommendedName>
    <alternativeName>
        <fullName evidence="1">ATP synthase F1 sector subunit alpha</fullName>
    </alternativeName>
    <alternativeName>
        <fullName evidence="1">F-ATPase subunit alpha</fullName>
    </alternativeName>
</protein>
<evidence type="ECO:0000255" key="1">
    <source>
        <dbReference type="HAMAP-Rule" id="MF_01346"/>
    </source>
</evidence>
<evidence type="ECO:0000305" key="2"/>